<proteinExistence type="inferred from homology"/>
<comment type="function">
    <text evidence="1">Assembles around the rod to form the L-ring and probably protects the motor/basal body from shearing forces during rotation.</text>
</comment>
<comment type="subunit">
    <text evidence="1">The basal body constitutes a major portion of the flagellar organelle and consists of four rings (L,P,S, and M) mounted on a central rod.</text>
</comment>
<comment type="subcellular location">
    <subcellularLocation>
        <location evidence="1">Cell outer membrane</location>
        <topology evidence="1">Lipid-anchor</topology>
    </subcellularLocation>
    <subcellularLocation>
        <location evidence="1">Bacterial flagellum basal body</location>
    </subcellularLocation>
</comment>
<comment type="similarity">
    <text evidence="1">Belongs to the FlgH family.</text>
</comment>
<keyword id="KW-0975">Bacterial flagellum</keyword>
<keyword id="KW-0998">Cell outer membrane</keyword>
<keyword id="KW-0449">Lipoprotein</keyword>
<keyword id="KW-0472">Membrane</keyword>
<keyword id="KW-0564">Palmitate</keyword>
<keyword id="KW-0732">Signal</keyword>
<feature type="signal peptide" evidence="1">
    <location>
        <begin position="1"/>
        <end position="16"/>
    </location>
</feature>
<feature type="chain" id="PRO_1000050103" description="Flagellar L-ring protein">
    <location>
        <begin position="17"/>
        <end position="236"/>
    </location>
</feature>
<feature type="region of interest" description="Disordered" evidence="2">
    <location>
        <begin position="96"/>
        <end position="143"/>
    </location>
</feature>
<feature type="compositionally biased region" description="Polar residues" evidence="2">
    <location>
        <begin position="105"/>
        <end position="122"/>
    </location>
</feature>
<feature type="lipid moiety-binding region" description="N-palmitoyl cysteine" evidence="1">
    <location>
        <position position="17"/>
    </location>
</feature>
<feature type="lipid moiety-binding region" description="S-diacylglycerol cysteine" evidence="1">
    <location>
        <position position="17"/>
    </location>
</feature>
<dbReference type="EMBL" id="CP000738">
    <property type="protein sequence ID" value="ABR59121.1"/>
    <property type="molecule type" value="Genomic_DNA"/>
</dbReference>
<dbReference type="RefSeq" id="WP_011974472.1">
    <property type="nucleotide sequence ID" value="NC_009636.1"/>
</dbReference>
<dbReference type="RefSeq" id="YP_001325956.1">
    <property type="nucleotide sequence ID" value="NC_009636.1"/>
</dbReference>
<dbReference type="SMR" id="A6U641"/>
<dbReference type="STRING" id="366394.Smed_0262"/>
<dbReference type="GeneID" id="61613102"/>
<dbReference type="KEGG" id="smd:Smed_0262"/>
<dbReference type="PATRIC" id="fig|366394.8.peg.3328"/>
<dbReference type="eggNOG" id="COG2063">
    <property type="taxonomic scope" value="Bacteria"/>
</dbReference>
<dbReference type="HOGENOM" id="CLU_069313_1_2_5"/>
<dbReference type="OrthoDB" id="9789227at2"/>
<dbReference type="Proteomes" id="UP000001108">
    <property type="component" value="Chromosome"/>
</dbReference>
<dbReference type="GO" id="GO:0009427">
    <property type="term" value="C:bacterial-type flagellum basal body, distal rod, L ring"/>
    <property type="evidence" value="ECO:0007669"/>
    <property type="project" value="InterPro"/>
</dbReference>
<dbReference type="GO" id="GO:0009279">
    <property type="term" value="C:cell outer membrane"/>
    <property type="evidence" value="ECO:0007669"/>
    <property type="project" value="UniProtKB-SubCell"/>
</dbReference>
<dbReference type="GO" id="GO:0003774">
    <property type="term" value="F:cytoskeletal motor activity"/>
    <property type="evidence" value="ECO:0007669"/>
    <property type="project" value="InterPro"/>
</dbReference>
<dbReference type="GO" id="GO:0071973">
    <property type="term" value="P:bacterial-type flagellum-dependent cell motility"/>
    <property type="evidence" value="ECO:0007669"/>
    <property type="project" value="InterPro"/>
</dbReference>
<dbReference type="HAMAP" id="MF_00415">
    <property type="entry name" value="FlgH"/>
    <property type="match status" value="1"/>
</dbReference>
<dbReference type="InterPro" id="IPR000527">
    <property type="entry name" value="Flag_Lring"/>
</dbReference>
<dbReference type="NCBIfam" id="NF001305">
    <property type="entry name" value="PRK00249.1-5"/>
    <property type="match status" value="1"/>
</dbReference>
<dbReference type="PANTHER" id="PTHR34933">
    <property type="entry name" value="FLAGELLAR L-RING PROTEIN"/>
    <property type="match status" value="1"/>
</dbReference>
<dbReference type="PANTHER" id="PTHR34933:SF1">
    <property type="entry name" value="FLAGELLAR L-RING PROTEIN"/>
    <property type="match status" value="1"/>
</dbReference>
<dbReference type="Pfam" id="PF02107">
    <property type="entry name" value="FlgH"/>
    <property type="match status" value="1"/>
</dbReference>
<dbReference type="PRINTS" id="PR01008">
    <property type="entry name" value="FLGLRINGFLGH"/>
</dbReference>
<dbReference type="PROSITE" id="PS51257">
    <property type="entry name" value="PROKAR_LIPOPROTEIN"/>
    <property type="match status" value="1"/>
</dbReference>
<name>FLGH_SINMW</name>
<reference key="1">
    <citation type="submission" date="2007-06" db="EMBL/GenBank/DDBJ databases">
        <title>Complete sequence of Sinorhizobium medicae WSM419 chromosome.</title>
        <authorList>
            <consortium name="US DOE Joint Genome Institute"/>
            <person name="Copeland A."/>
            <person name="Lucas S."/>
            <person name="Lapidus A."/>
            <person name="Barry K."/>
            <person name="Glavina del Rio T."/>
            <person name="Dalin E."/>
            <person name="Tice H."/>
            <person name="Pitluck S."/>
            <person name="Chain P."/>
            <person name="Malfatti S."/>
            <person name="Shin M."/>
            <person name="Vergez L."/>
            <person name="Schmutz J."/>
            <person name="Larimer F."/>
            <person name="Land M."/>
            <person name="Hauser L."/>
            <person name="Kyrpides N."/>
            <person name="Mikhailova N."/>
            <person name="Reeve W.G."/>
            <person name="Richardson P."/>
        </authorList>
    </citation>
    <scope>NUCLEOTIDE SEQUENCE [LARGE SCALE GENOMIC DNA]</scope>
    <source>
        <strain>WSM419</strain>
    </source>
</reference>
<accession>A6U641</accession>
<gene>
    <name evidence="1" type="primary">flgH</name>
    <name type="ordered locus">Smed_0262</name>
</gene>
<evidence type="ECO:0000255" key="1">
    <source>
        <dbReference type="HAMAP-Rule" id="MF_00415"/>
    </source>
</evidence>
<evidence type="ECO:0000256" key="2">
    <source>
        <dbReference type="SAM" id="MobiDB-lite"/>
    </source>
</evidence>
<protein>
    <recommendedName>
        <fullName evidence="1">Flagellar L-ring protein</fullName>
    </recommendedName>
    <alternativeName>
        <fullName evidence="1">Basal body L-ring protein</fullName>
    </alternativeName>
</protein>
<sequence length="236" mass="25775">MRMRITAILAAGLLAGCQNQAFNEIGRAPAMSPIGSGLQYTQTPQLAMYPKQPRHVTNGYSLWNDQQAALFKDARAINIGDILTVDIRIDDKASFENETDRSRKNSSGFNLGASGESQTSDFAWSGDLEYGSNTKTEGDGKTERSEKLRLLVAAVVTGVLENGNLLISGSQEVRVNHELRILNVAGIVRPRDVDADNVISYDRIAEARISYGGRGRLTEVQQPPWGQQLVDLVSPL</sequence>
<organism>
    <name type="scientific">Sinorhizobium medicae (strain WSM419)</name>
    <name type="common">Ensifer medicae</name>
    <dbReference type="NCBI Taxonomy" id="366394"/>
    <lineage>
        <taxon>Bacteria</taxon>
        <taxon>Pseudomonadati</taxon>
        <taxon>Pseudomonadota</taxon>
        <taxon>Alphaproteobacteria</taxon>
        <taxon>Hyphomicrobiales</taxon>
        <taxon>Rhizobiaceae</taxon>
        <taxon>Sinorhizobium/Ensifer group</taxon>
        <taxon>Sinorhizobium</taxon>
    </lineage>
</organism>